<feature type="chain" id="PRO_1000148962" description="1-(5-phosphoribosyl)-5-[(5-phosphoribosylamino)methylideneamino] imidazole-4-carboxamide isomerase">
    <location>
        <begin position="1"/>
        <end position="242"/>
    </location>
</feature>
<feature type="active site" description="Proton acceptor" evidence="1">
    <location>
        <position position="8"/>
    </location>
</feature>
<feature type="active site" description="Proton donor" evidence="1">
    <location>
        <position position="129"/>
    </location>
</feature>
<evidence type="ECO:0000255" key="1">
    <source>
        <dbReference type="HAMAP-Rule" id="MF_01014"/>
    </source>
</evidence>
<organism>
    <name type="scientific">Clostridium botulinum (strain Kyoto / Type A2)</name>
    <dbReference type="NCBI Taxonomy" id="536232"/>
    <lineage>
        <taxon>Bacteria</taxon>
        <taxon>Bacillati</taxon>
        <taxon>Bacillota</taxon>
        <taxon>Clostridia</taxon>
        <taxon>Eubacteriales</taxon>
        <taxon>Clostridiaceae</taxon>
        <taxon>Clostridium</taxon>
    </lineage>
</organism>
<keyword id="KW-0028">Amino-acid biosynthesis</keyword>
<keyword id="KW-0963">Cytoplasm</keyword>
<keyword id="KW-0368">Histidine biosynthesis</keyword>
<keyword id="KW-0413">Isomerase</keyword>
<name>HIS4_CLOBJ</name>
<accession>C1FN40</accession>
<sequence length="242" mass="26252">MIILPAIDLKEGKCIRLYQGDFKASKVVAEDPIEVALKFKENGAEYIHIVDLDGALTGEIKNLSIISSIIKTINIPVELGGGIRNLNTIDMLIGAGIERIILGTAALNNRGLVEEAVKKYDEKIAIGIDAKNEKVAINGWLNVSSINYIDFAKEMEKIGVRNIIFTDISKDGTLKGPNLKQLEKLNESISCNVIASGGIKDIEDLKVIKEMDVYGAIVGKAIYSGNINLNEAIKIINKGSSK</sequence>
<gene>
    <name evidence="1" type="primary">hisA</name>
    <name type="ordered locus">CLM_1811</name>
</gene>
<proteinExistence type="inferred from homology"/>
<comment type="catalytic activity">
    <reaction evidence="1">
        <text>1-(5-phospho-beta-D-ribosyl)-5-[(5-phospho-beta-D-ribosylamino)methylideneamino]imidazole-4-carboxamide = 5-[(5-phospho-1-deoxy-D-ribulos-1-ylimino)methylamino]-1-(5-phospho-beta-D-ribosyl)imidazole-4-carboxamide</text>
        <dbReference type="Rhea" id="RHEA:15469"/>
        <dbReference type="ChEBI" id="CHEBI:58435"/>
        <dbReference type="ChEBI" id="CHEBI:58525"/>
        <dbReference type="EC" id="5.3.1.16"/>
    </reaction>
</comment>
<comment type="pathway">
    <text evidence="1">Amino-acid biosynthesis; L-histidine biosynthesis; L-histidine from 5-phospho-alpha-D-ribose 1-diphosphate: step 4/9.</text>
</comment>
<comment type="subcellular location">
    <subcellularLocation>
        <location evidence="1">Cytoplasm</location>
    </subcellularLocation>
</comment>
<comment type="similarity">
    <text evidence="1">Belongs to the HisA/HisF family.</text>
</comment>
<protein>
    <recommendedName>
        <fullName evidence="1">1-(5-phosphoribosyl)-5-[(5-phosphoribosylamino)methylideneamino] imidazole-4-carboxamide isomerase</fullName>
        <ecNumber evidence="1">5.3.1.16</ecNumber>
    </recommendedName>
    <alternativeName>
        <fullName evidence="1">Phosphoribosylformimino-5-aminoimidazole carboxamide ribotide isomerase</fullName>
    </alternativeName>
</protein>
<dbReference type="EC" id="5.3.1.16" evidence="1"/>
<dbReference type="EMBL" id="CP001581">
    <property type="protein sequence ID" value="ACO86777.1"/>
    <property type="molecule type" value="Genomic_DNA"/>
</dbReference>
<dbReference type="RefSeq" id="WP_003358672.1">
    <property type="nucleotide sequence ID" value="NC_012563.1"/>
</dbReference>
<dbReference type="SMR" id="C1FN40"/>
<dbReference type="KEGG" id="cby:CLM_1811"/>
<dbReference type="eggNOG" id="COG0106">
    <property type="taxonomic scope" value="Bacteria"/>
</dbReference>
<dbReference type="HOGENOM" id="CLU_048577_1_2_9"/>
<dbReference type="UniPathway" id="UPA00031">
    <property type="reaction ID" value="UER00009"/>
</dbReference>
<dbReference type="Proteomes" id="UP000001374">
    <property type="component" value="Chromosome"/>
</dbReference>
<dbReference type="GO" id="GO:0005737">
    <property type="term" value="C:cytoplasm"/>
    <property type="evidence" value="ECO:0007669"/>
    <property type="project" value="UniProtKB-SubCell"/>
</dbReference>
<dbReference type="GO" id="GO:0003949">
    <property type="term" value="F:1-(5-phosphoribosyl)-5-[(5-phosphoribosylamino)methylideneamino]imidazole-4-carboxamide isomerase activity"/>
    <property type="evidence" value="ECO:0007669"/>
    <property type="project" value="UniProtKB-UniRule"/>
</dbReference>
<dbReference type="GO" id="GO:0000105">
    <property type="term" value="P:L-histidine biosynthetic process"/>
    <property type="evidence" value="ECO:0007669"/>
    <property type="project" value="UniProtKB-UniRule"/>
</dbReference>
<dbReference type="GO" id="GO:0000162">
    <property type="term" value="P:L-tryptophan biosynthetic process"/>
    <property type="evidence" value="ECO:0007669"/>
    <property type="project" value="TreeGrafter"/>
</dbReference>
<dbReference type="CDD" id="cd04732">
    <property type="entry name" value="HisA"/>
    <property type="match status" value="1"/>
</dbReference>
<dbReference type="FunFam" id="3.20.20.70:FF:000009">
    <property type="entry name" value="1-(5-phosphoribosyl)-5-[(5-phosphoribosylamino)methylideneamino] imidazole-4-carboxamide isomerase"/>
    <property type="match status" value="1"/>
</dbReference>
<dbReference type="Gene3D" id="3.20.20.70">
    <property type="entry name" value="Aldolase class I"/>
    <property type="match status" value="1"/>
</dbReference>
<dbReference type="HAMAP" id="MF_01014">
    <property type="entry name" value="HisA"/>
    <property type="match status" value="1"/>
</dbReference>
<dbReference type="InterPro" id="IPR013785">
    <property type="entry name" value="Aldolase_TIM"/>
</dbReference>
<dbReference type="InterPro" id="IPR006062">
    <property type="entry name" value="His_biosynth"/>
</dbReference>
<dbReference type="InterPro" id="IPR006063">
    <property type="entry name" value="HisA_bact_arch"/>
</dbReference>
<dbReference type="InterPro" id="IPR044524">
    <property type="entry name" value="Isoase_HisA-like"/>
</dbReference>
<dbReference type="InterPro" id="IPR023016">
    <property type="entry name" value="Isoase_HisA-like_bact"/>
</dbReference>
<dbReference type="InterPro" id="IPR011060">
    <property type="entry name" value="RibuloseP-bd_barrel"/>
</dbReference>
<dbReference type="NCBIfam" id="TIGR00007">
    <property type="entry name" value="1-(5-phosphoribosyl)-5-[(5-phosphoribosylamino)methylideneamino]imidazole-4-carboxamide isomerase"/>
    <property type="match status" value="1"/>
</dbReference>
<dbReference type="PANTHER" id="PTHR43090">
    <property type="entry name" value="1-(5-PHOSPHORIBOSYL)-5-[(5-PHOSPHORIBOSYLAMINO)METHYLIDENEAMINO] IMIDAZOLE-4-CARBOXAMIDE ISOMERASE"/>
    <property type="match status" value="1"/>
</dbReference>
<dbReference type="PANTHER" id="PTHR43090:SF2">
    <property type="entry name" value="1-(5-PHOSPHORIBOSYL)-5-[(5-PHOSPHORIBOSYLAMINO)METHYLIDENEAMINO] IMIDAZOLE-4-CARBOXAMIDE ISOMERASE"/>
    <property type="match status" value="1"/>
</dbReference>
<dbReference type="Pfam" id="PF00977">
    <property type="entry name" value="His_biosynth"/>
    <property type="match status" value="1"/>
</dbReference>
<dbReference type="SUPFAM" id="SSF51366">
    <property type="entry name" value="Ribulose-phoshate binding barrel"/>
    <property type="match status" value="1"/>
</dbReference>
<reference key="1">
    <citation type="submission" date="2008-10" db="EMBL/GenBank/DDBJ databases">
        <title>Genome sequence of Clostridium botulinum A2 Kyoto.</title>
        <authorList>
            <person name="Shrivastava S."/>
            <person name="Brinkac L.M."/>
            <person name="Brown J.L."/>
            <person name="Bruce D."/>
            <person name="Detter C.C."/>
            <person name="Johnson E.A."/>
            <person name="Munk C.A."/>
            <person name="Smith L.A."/>
            <person name="Smith T.J."/>
            <person name="Sutton G."/>
            <person name="Brettin T.S."/>
        </authorList>
    </citation>
    <scope>NUCLEOTIDE SEQUENCE [LARGE SCALE GENOMIC DNA]</scope>
    <source>
        <strain>Kyoto / Type A2</strain>
    </source>
</reference>